<evidence type="ECO:0000255" key="1">
    <source>
        <dbReference type="HAMAP-Rule" id="MF_01346"/>
    </source>
</evidence>
<accession>B2UUP2</accession>
<reference key="1">
    <citation type="submission" date="2008-05" db="EMBL/GenBank/DDBJ databases">
        <title>Genome sequence of Helicobacter pylori from the remote Amazon: traces of Asian ancestry of the first Americans.</title>
        <authorList>
            <person name="Kersulyte D."/>
            <person name="Kalia A."/>
            <person name="Gilman R.H."/>
            <person name="Berg D.E."/>
        </authorList>
    </citation>
    <scope>NUCLEOTIDE SEQUENCE [LARGE SCALE GENOMIC DNA]</scope>
    <source>
        <strain>Shi470</strain>
    </source>
</reference>
<organism>
    <name type="scientific">Helicobacter pylori (strain Shi470)</name>
    <dbReference type="NCBI Taxonomy" id="512562"/>
    <lineage>
        <taxon>Bacteria</taxon>
        <taxon>Pseudomonadati</taxon>
        <taxon>Campylobacterota</taxon>
        <taxon>Epsilonproteobacteria</taxon>
        <taxon>Campylobacterales</taxon>
        <taxon>Helicobacteraceae</taxon>
        <taxon>Helicobacter</taxon>
    </lineage>
</organism>
<proteinExistence type="inferred from homology"/>
<protein>
    <recommendedName>
        <fullName evidence="1">ATP synthase subunit alpha</fullName>
        <ecNumber evidence="1">7.1.2.2</ecNumber>
    </recommendedName>
    <alternativeName>
        <fullName evidence="1">ATP synthase F1 sector subunit alpha</fullName>
    </alternativeName>
    <alternativeName>
        <fullName evidence="1">F-ATPase subunit alpha</fullName>
    </alternativeName>
</protein>
<dbReference type="EC" id="7.1.2.2" evidence="1"/>
<dbReference type="EMBL" id="CP001072">
    <property type="protein sequence ID" value="ACD48574.1"/>
    <property type="molecule type" value="Genomic_DNA"/>
</dbReference>
<dbReference type="RefSeq" id="WP_000080508.1">
    <property type="nucleotide sequence ID" value="NC_010698.2"/>
</dbReference>
<dbReference type="SMR" id="B2UUP2"/>
<dbReference type="KEGG" id="hps:HPSH_05840"/>
<dbReference type="HOGENOM" id="CLU_010091_2_1_7"/>
<dbReference type="GO" id="GO:0005886">
    <property type="term" value="C:plasma membrane"/>
    <property type="evidence" value="ECO:0007669"/>
    <property type="project" value="UniProtKB-SubCell"/>
</dbReference>
<dbReference type="GO" id="GO:0045259">
    <property type="term" value="C:proton-transporting ATP synthase complex"/>
    <property type="evidence" value="ECO:0007669"/>
    <property type="project" value="UniProtKB-KW"/>
</dbReference>
<dbReference type="GO" id="GO:0043531">
    <property type="term" value="F:ADP binding"/>
    <property type="evidence" value="ECO:0007669"/>
    <property type="project" value="TreeGrafter"/>
</dbReference>
<dbReference type="GO" id="GO:0005524">
    <property type="term" value="F:ATP binding"/>
    <property type="evidence" value="ECO:0007669"/>
    <property type="project" value="UniProtKB-UniRule"/>
</dbReference>
<dbReference type="GO" id="GO:0046933">
    <property type="term" value="F:proton-transporting ATP synthase activity, rotational mechanism"/>
    <property type="evidence" value="ECO:0007669"/>
    <property type="project" value="UniProtKB-UniRule"/>
</dbReference>
<dbReference type="CDD" id="cd18113">
    <property type="entry name" value="ATP-synt_F1_alpha_C"/>
    <property type="match status" value="1"/>
</dbReference>
<dbReference type="CDD" id="cd18116">
    <property type="entry name" value="ATP-synt_F1_alpha_N"/>
    <property type="match status" value="1"/>
</dbReference>
<dbReference type="CDD" id="cd01132">
    <property type="entry name" value="F1-ATPase_alpha_CD"/>
    <property type="match status" value="1"/>
</dbReference>
<dbReference type="FunFam" id="1.20.150.20:FF:000001">
    <property type="entry name" value="ATP synthase subunit alpha"/>
    <property type="match status" value="1"/>
</dbReference>
<dbReference type="FunFam" id="3.40.50.300:FF:000002">
    <property type="entry name" value="ATP synthase subunit alpha"/>
    <property type="match status" value="1"/>
</dbReference>
<dbReference type="Gene3D" id="2.40.30.20">
    <property type="match status" value="1"/>
</dbReference>
<dbReference type="Gene3D" id="1.20.150.20">
    <property type="entry name" value="ATP synthase alpha/beta chain, C-terminal domain"/>
    <property type="match status" value="1"/>
</dbReference>
<dbReference type="Gene3D" id="3.40.50.300">
    <property type="entry name" value="P-loop containing nucleotide triphosphate hydrolases"/>
    <property type="match status" value="1"/>
</dbReference>
<dbReference type="HAMAP" id="MF_01346">
    <property type="entry name" value="ATP_synth_alpha_bact"/>
    <property type="match status" value="1"/>
</dbReference>
<dbReference type="InterPro" id="IPR023366">
    <property type="entry name" value="ATP_synth_asu-like_sf"/>
</dbReference>
<dbReference type="InterPro" id="IPR000793">
    <property type="entry name" value="ATP_synth_asu_C"/>
</dbReference>
<dbReference type="InterPro" id="IPR038376">
    <property type="entry name" value="ATP_synth_asu_C_sf"/>
</dbReference>
<dbReference type="InterPro" id="IPR033732">
    <property type="entry name" value="ATP_synth_F1_a_nt-bd_dom"/>
</dbReference>
<dbReference type="InterPro" id="IPR005294">
    <property type="entry name" value="ATP_synth_F1_asu"/>
</dbReference>
<dbReference type="InterPro" id="IPR020003">
    <property type="entry name" value="ATPase_a/bsu_AS"/>
</dbReference>
<dbReference type="InterPro" id="IPR004100">
    <property type="entry name" value="ATPase_F1/V1/A1_a/bsu_N"/>
</dbReference>
<dbReference type="InterPro" id="IPR036121">
    <property type="entry name" value="ATPase_F1/V1/A1_a/bsu_N_sf"/>
</dbReference>
<dbReference type="InterPro" id="IPR000194">
    <property type="entry name" value="ATPase_F1/V1/A1_a/bsu_nucl-bd"/>
</dbReference>
<dbReference type="InterPro" id="IPR027417">
    <property type="entry name" value="P-loop_NTPase"/>
</dbReference>
<dbReference type="NCBIfam" id="TIGR00962">
    <property type="entry name" value="atpA"/>
    <property type="match status" value="1"/>
</dbReference>
<dbReference type="NCBIfam" id="NF009884">
    <property type="entry name" value="PRK13343.1"/>
    <property type="match status" value="1"/>
</dbReference>
<dbReference type="PANTHER" id="PTHR48082">
    <property type="entry name" value="ATP SYNTHASE SUBUNIT ALPHA, MITOCHONDRIAL"/>
    <property type="match status" value="1"/>
</dbReference>
<dbReference type="PANTHER" id="PTHR48082:SF2">
    <property type="entry name" value="ATP SYNTHASE SUBUNIT ALPHA, MITOCHONDRIAL"/>
    <property type="match status" value="1"/>
</dbReference>
<dbReference type="Pfam" id="PF00006">
    <property type="entry name" value="ATP-synt_ab"/>
    <property type="match status" value="1"/>
</dbReference>
<dbReference type="Pfam" id="PF00306">
    <property type="entry name" value="ATP-synt_ab_C"/>
    <property type="match status" value="1"/>
</dbReference>
<dbReference type="Pfam" id="PF02874">
    <property type="entry name" value="ATP-synt_ab_N"/>
    <property type="match status" value="1"/>
</dbReference>
<dbReference type="PIRSF" id="PIRSF039088">
    <property type="entry name" value="F_ATPase_subunit_alpha"/>
    <property type="match status" value="1"/>
</dbReference>
<dbReference type="SUPFAM" id="SSF47917">
    <property type="entry name" value="C-terminal domain of alpha and beta subunits of F1 ATP synthase"/>
    <property type="match status" value="1"/>
</dbReference>
<dbReference type="SUPFAM" id="SSF50615">
    <property type="entry name" value="N-terminal domain of alpha and beta subunits of F1 ATP synthase"/>
    <property type="match status" value="1"/>
</dbReference>
<dbReference type="SUPFAM" id="SSF52540">
    <property type="entry name" value="P-loop containing nucleoside triphosphate hydrolases"/>
    <property type="match status" value="1"/>
</dbReference>
<dbReference type="PROSITE" id="PS00152">
    <property type="entry name" value="ATPASE_ALPHA_BETA"/>
    <property type="match status" value="1"/>
</dbReference>
<feature type="chain" id="PRO_1000143392" description="ATP synthase subunit alpha">
    <location>
        <begin position="1"/>
        <end position="503"/>
    </location>
</feature>
<feature type="binding site" evidence="1">
    <location>
        <begin position="170"/>
        <end position="177"/>
    </location>
    <ligand>
        <name>ATP</name>
        <dbReference type="ChEBI" id="CHEBI:30616"/>
    </ligand>
</feature>
<feature type="site" description="Required for activity" evidence="1">
    <location>
        <position position="363"/>
    </location>
</feature>
<name>ATPA_HELPS</name>
<comment type="function">
    <text evidence="1">Produces ATP from ADP in the presence of a proton gradient across the membrane. The alpha chain is a regulatory subunit.</text>
</comment>
<comment type="catalytic activity">
    <reaction evidence="1">
        <text>ATP + H2O + 4 H(+)(in) = ADP + phosphate + 5 H(+)(out)</text>
        <dbReference type="Rhea" id="RHEA:57720"/>
        <dbReference type="ChEBI" id="CHEBI:15377"/>
        <dbReference type="ChEBI" id="CHEBI:15378"/>
        <dbReference type="ChEBI" id="CHEBI:30616"/>
        <dbReference type="ChEBI" id="CHEBI:43474"/>
        <dbReference type="ChEBI" id="CHEBI:456216"/>
        <dbReference type="EC" id="7.1.2.2"/>
    </reaction>
</comment>
<comment type="subunit">
    <text evidence="1">F-type ATPases have 2 components, CF(1) - the catalytic core - and CF(0) - the membrane proton channel. CF(1) has five subunits: alpha(3), beta(3), gamma(1), delta(1), epsilon(1). CF(0) has three main subunits: a(1), b(2) and c(9-12). The alpha and beta chains form an alternating ring which encloses part of the gamma chain. CF(1) is attached to CF(0) by a central stalk formed by the gamma and epsilon chains, while a peripheral stalk is formed by the delta and b chains.</text>
</comment>
<comment type="subcellular location">
    <subcellularLocation>
        <location evidence="1">Cell inner membrane</location>
        <topology evidence="1">Peripheral membrane protein</topology>
    </subcellularLocation>
</comment>
<comment type="similarity">
    <text evidence="1">Belongs to the ATPase alpha/beta chains family.</text>
</comment>
<sequence length="503" mass="55171">MSQLKLEEISSVIEEKIKNFELDCDMAEVGKVVSYADGVAKVYGLNGVMSYEVLEFETGDKGVAANLEEDSVGVIVFGFGNNIKEGTSVKRTKSLMKVPVGDAVVGRVLNALGEPIDGKGEIETNEFSLIEQKAPGIMDRKSVHEPLQTGIKAIDALVPIGRGQRELIIGDKQTGKTTVAIDAIINQKGQNVICIYVAIGQKESTVAQVVRKLEEYGAMEYSVVINASASDSAAMQYLAPYSGVAMGEYFRDHARHALIIYDDLSKHAVAYREISLILRRPPGREAFPGDVFYIHSRLLERAAKLCDEKGAGSLTALPIVETQAGDVSAYIPTNIISITDGQIFLETDLFYSGIRPAINVGLSVSRVGGAAQIKATKQVSGTLRLDLAQYRELQAFTQFASDLDEASKKQLERGQRMVEVLKQAPYSPLPIEKQVVIIYAGAKGFLDSVSVKKVVDFEEQLHPFLEAKYPQVLEEIHTKKVLDKDLEAMLRKVLEEFKLTYSE</sequence>
<keyword id="KW-0066">ATP synthesis</keyword>
<keyword id="KW-0067">ATP-binding</keyword>
<keyword id="KW-0997">Cell inner membrane</keyword>
<keyword id="KW-1003">Cell membrane</keyword>
<keyword id="KW-0139">CF(1)</keyword>
<keyword id="KW-0375">Hydrogen ion transport</keyword>
<keyword id="KW-0406">Ion transport</keyword>
<keyword id="KW-0472">Membrane</keyword>
<keyword id="KW-0547">Nucleotide-binding</keyword>
<keyword id="KW-1278">Translocase</keyword>
<keyword id="KW-0813">Transport</keyword>
<gene>
    <name evidence="1" type="primary">atpA</name>
    <name type="ordered locus">HPSH_05840</name>
</gene>